<evidence type="ECO:0000250" key="1">
    <source>
        <dbReference type="UniProtKB" id="P30711"/>
    </source>
</evidence>
<evidence type="ECO:0000255" key="2">
    <source>
        <dbReference type="PROSITE-ProRule" id="PRU00684"/>
    </source>
</evidence>
<evidence type="ECO:0000255" key="3">
    <source>
        <dbReference type="PROSITE-ProRule" id="PRU00685"/>
    </source>
</evidence>
<evidence type="ECO:0000269" key="4">
    <source>
    </source>
</evidence>
<evidence type="ECO:0000303" key="5">
    <source>
    </source>
</evidence>
<evidence type="ECO:0000305" key="6"/>
<evidence type="ECO:0000312" key="7">
    <source>
        <dbReference type="EMBL" id="AAH03903.1"/>
    </source>
</evidence>
<evidence type="ECO:0000312" key="8">
    <source>
        <dbReference type="EMBL" id="AAH62201.1"/>
    </source>
</evidence>
<evidence type="ECO:0000312" key="9">
    <source>
        <dbReference type="EMBL" id="AAM33420.1"/>
    </source>
</evidence>
<evidence type="ECO:0000312" key="10">
    <source>
        <dbReference type="EMBL" id="BAE23741.1"/>
    </source>
</evidence>
<evidence type="ECO:0000312" key="11">
    <source>
        <dbReference type="EMBL" id="EDL31889.1"/>
    </source>
</evidence>
<evidence type="ECO:0000312" key="12">
    <source>
        <dbReference type="Proteomes" id="UP000000589"/>
    </source>
</evidence>
<accession>Q99L20</accession>
<accession>Q6P6I4</accession>
<comment type="function">
    <text evidence="4">Conjugation of reduced glutathione to a wide number of exogenous and endogenous hydrophobic electrophiles. Shows high activity towards 4-nitrobenzyl chloride (4-NBC). Also has lower activity towards 1,2-epoxy-3-(p-nitrophenoxy)propane (EPNP), cumene hydroperoxide, 1-chloro-2,4-dinitrobenzene (CDNB), 7-chloro-4-nitrobenzo-2-oxa-1,3-diazole (NBD-Cl), and ethacrynic acid.</text>
</comment>
<comment type="catalytic activity">
    <reaction evidence="4">
        <text>RX + glutathione = an S-substituted glutathione + a halide anion + H(+)</text>
        <dbReference type="Rhea" id="RHEA:16437"/>
        <dbReference type="ChEBI" id="CHEBI:15378"/>
        <dbReference type="ChEBI" id="CHEBI:16042"/>
        <dbReference type="ChEBI" id="CHEBI:17792"/>
        <dbReference type="ChEBI" id="CHEBI:57925"/>
        <dbReference type="ChEBI" id="CHEBI:90779"/>
        <dbReference type="EC" id="2.5.1.18"/>
    </reaction>
</comment>
<comment type="subunit">
    <text evidence="1">Homodimer.</text>
</comment>
<comment type="subcellular location">
    <subcellularLocation>
        <location evidence="6">Cytoplasm</location>
    </subcellularLocation>
</comment>
<comment type="tissue specificity">
    <text evidence="4">Expressed strongly in liver, and at lower levels in kidney and testis.</text>
</comment>
<comment type="similarity">
    <text evidence="6">Belongs to the GST superfamily. Theta family.</text>
</comment>
<organism evidence="12">
    <name type="scientific">Mus musculus</name>
    <name type="common">Mouse</name>
    <dbReference type="NCBI Taxonomy" id="10090"/>
    <lineage>
        <taxon>Eukaryota</taxon>
        <taxon>Metazoa</taxon>
        <taxon>Chordata</taxon>
        <taxon>Craniata</taxon>
        <taxon>Vertebrata</taxon>
        <taxon>Euteleostomi</taxon>
        <taxon>Mammalia</taxon>
        <taxon>Eutheria</taxon>
        <taxon>Euarchontoglires</taxon>
        <taxon>Glires</taxon>
        <taxon>Rodentia</taxon>
        <taxon>Myomorpha</taxon>
        <taxon>Muroidea</taxon>
        <taxon>Muridae</taxon>
        <taxon>Murinae</taxon>
        <taxon>Mus</taxon>
        <taxon>Mus</taxon>
    </lineage>
</organism>
<dbReference type="EC" id="2.5.1.18" evidence="4"/>
<dbReference type="EMBL" id="AF508157">
    <property type="protein sequence ID" value="AAM33420.1"/>
    <property type="molecule type" value="mRNA"/>
</dbReference>
<dbReference type="EMBL" id="AK138669">
    <property type="protein sequence ID" value="BAE23741.1"/>
    <property type="molecule type" value="mRNA"/>
</dbReference>
<dbReference type="EMBL" id="AK154161">
    <property type="protein sequence ID" value="BAE32415.1"/>
    <property type="molecule type" value="mRNA"/>
</dbReference>
<dbReference type="EMBL" id="AK168226">
    <property type="protein sequence ID" value="BAE40180.1"/>
    <property type="molecule type" value="mRNA"/>
</dbReference>
<dbReference type="EMBL" id="AC142499">
    <property type="status" value="NOT_ANNOTATED_CDS"/>
    <property type="molecule type" value="Genomic_DNA"/>
</dbReference>
<dbReference type="EMBL" id="CH466553">
    <property type="protein sequence ID" value="EDL31889.1"/>
    <property type="molecule type" value="Genomic_DNA"/>
</dbReference>
<dbReference type="EMBL" id="BC003903">
    <property type="protein sequence ID" value="AAH03903.1"/>
    <property type="molecule type" value="mRNA"/>
</dbReference>
<dbReference type="EMBL" id="BC057964">
    <property type="protein sequence ID" value="AAH57964.1"/>
    <property type="molecule type" value="mRNA"/>
</dbReference>
<dbReference type="EMBL" id="BC062201">
    <property type="protein sequence ID" value="AAH62201.1"/>
    <property type="molecule type" value="mRNA"/>
</dbReference>
<dbReference type="CCDS" id="CCDS23931.1"/>
<dbReference type="RefSeq" id="NP_001333452.1">
    <property type="nucleotide sequence ID" value="NM_001346523.1"/>
</dbReference>
<dbReference type="RefSeq" id="NP_598755.1">
    <property type="nucleotide sequence ID" value="NM_133994.3"/>
</dbReference>
<dbReference type="SMR" id="Q99L20"/>
<dbReference type="FunCoup" id="Q99L20">
    <property type="interactions" value="679"/>
</dbReference>
<dbReference type="STRING" id="10090.ENSMUSP00000001715"/>
<dbReference type="iPTMnet" id="Q99L20"/>
<dbReference type="PhosphoSitePlus" id="Q99L20"/>
<dbReference type="SwissPalm" id="Q99L20"/>
<dbReference type="jPOST" id="Q99L20"/>
<dbReference type="PaxDb" id="10090-ENSMUSP00000001715"/>
<dbReference type="ProteomicsDB" id="271482"/>
<dbReference type="Pumba" id="Q99L20"/>
<dbReference type="DNASU" id="103140"/>
<dbReference type="Ensembl" id="ENSMUST00000001715.10">
    <property type="protein sequence ID" value="ENSMUSP00000001715.4"/>
    <property type="gene ID" value="ENSMUSG00000001665.12"/>
</dbReference>
<dbReference type="GeneID" id="103140"/>
<dbReference type="KEGG" id="mmu:103140"/>
<dbReference type="UCSC" id="uc007frb.1">
    <property type="organism name" value="mouse"/>
</dbReference>
<dbReference type="AGR" id="MGI:2143526"/>
<dbReference type="CTD" id="103140"/>
<dbReference type="MGI" id="MGI:2143526">
    <property type="gene designation" value="Gstt3"/>
</dbReference>
<dbReference type="VEuPathDB" id="HostDB:ENSMUSG00000001665"/>
<dbReference type="eggNOG" id="KOG0867">
    <property type="taxonomic scope" value="Eukaryota"/>
</dbReference>
<dbReference type="GeneTree" id="ENSGT00940000156366"/>
<dbReference type="InParanoid" id="Q99L20"/>
<dbReference type="OMA" id="AKGAHKQ"/>
<dbReference type="OrthoDB" id="422574at2759"/>
<dbReference type="PhylomeDB" id="Q99L20"/>
<dbReference type="TreeFam" id="TF325759"/>
<dbReference type="BioGRID-ORCS" id="103140">
    <property type="hits" value="1 hit in 77 CRISPR screens"/>
</dbReference>
<dbReference type="ChiTaRS" id="Gstt3">
    <property type="organism name" value="mouse"/>
</dbReference>
<dbReference type="PRO" id="PR:Q99L20"/>
<dbReference type="Proteomes" id="UP000000589">
    <property type="component" value="Chromosome 10"/>
</dbReference>
<dbReference type="RNAct" id="Q99L20">
    <property type="molecule type" value="protein"/>
</dbReference>
<dbReference type="Bgee" id="ENSMUSG00000001665">
    <property type="expression patterns" value="Expressed in prostate gland ventral lobe and 169 other cell types or tissues"/>
</dbReference>
<dbReference type="ExpressionAtlas" id="Q99L20">
    <property type="expression patterns" value="baseline and differential"/>
</dbReference>
<dbReference type="GO" id="GO:0005737">
    <property type="term" value="C:cytoplasm"/>
    <property type="evidence" value="ECO:0007669"/>
    <property type="project" value="UniProtKB-SubCell"/>
</dbReference>
<dbReference type="GO" id="GO:0004364">
    <property type="term" value="F:glutathione transferase activity"/>
    <property type="evidence" value="ECO:0000314"/>
    <property type="project" value="MGI"/>
</dbReference>
<dbReference type="GO" id="GO:0006749">
    <property type="term" value="P:glutathione metabolic process"/>
    <property type="evidence" value="ECO:0000314"/>
    <property type="project" value="MGI"/>
</dbReference>
<dbReference type="CDD" id="cd03183">
    <property type="entry name" value="GST_C_Theta"/>
    <property type="match status" value="1"/>
</dbReference>
<dbReference type="CDD" id="cd03050">
    <property type="entry name" value="GST_N_Theta"/>
    <property type="match status" value="1"/>
</dbReference>
<dbReference type="FunFam" id="1.20.1050.10:FF:000008">
    <property type="entry name" value="Glutathione S-transferase theta-1"/>
    <property type="match status" value="1"/>
</dbReference>
<dbReference type="FunFam" id="3.40.30.10:FF:000086">
    <property type="entry name" value="Glutathione S-transferase theta-1"/>
    <property type="match status" value="1"/>
</dbReference>
<dbReference type="Gene3D" id="1.20.1050.10">
    <property type="match status" value="1"/>
</dbReference>
<dbReference type="Gene3D" id="3.40.30.10">
    <property type="entry name" value="Glutaredoxin"/>
    <property type="match status" value="1"/>
</dbReference>
<dbReference type="InterPro" id="IPR010987">
    <property type="entry name" value="Glutathione-S-Trfase_C-like"/>
</dbReference>
<dbReference type="InterPro" id="IPR036282">
    <property type="entry name" value="Glutathione-S-Trfase_C_sf"/>
</dbReference>
<dbReference type="InterPro" id="IPR040079">
    <property type="entry name" value="Glutathione_S-Trfase"/>
</dbReference>
<dbReference type="InterPro" id="IPR004045">
    <property type="entry name" value="Glutathione_S-Trfase_N"/>
</dbReference>
<dbReference type="InterPro" id="IPR004046">
    <property type="entry name" value="GST_C"/>
</dbReference>
<dbReference type="InterPro" id="IPR040077">
    <property type="entry name" value="GST_C_Theta"/>
</dbReference>
<dbReference type="InterPro" id="IPR040075">
    <property type="entry name" value="GST_N_Theta"/>
</dbReference>
<dbReference type="InterPro" id="IPR051369">
    <property type="entry name" value="GST_Theta"/>
</dbReference>
<dbReference type="InterPro" id="IPR036249">
    <property type="entry name" value="Thioredoxin-like_sf"/>
</dbReference>
<dbReference type="PANTHER" id="PTHR43917">
    <property type="match status" value="1"/>
</dbReference>
<dbReference type="PANTHER" id="PTHR43917:SF12">
    <property type="entry name" value="GLUTATHIONE S-TRANSFERASE THETA-3"/>
    <property type="match status" value="1"/>
</dbReference>
<dbReference type="Pfam" id="PF00043">
    <property type="entry name" value="GST_C"/>
    <property type="match status" value="1"/>
</dbReference>
<dbReference type="Pfam" id="PF02798">
    <property type="entry name" value="GST_N"/>
    <property type="match status" value="1"/>
</dbReference>
<dbReference type="SFLD" id="SFLDS00019">
    <property type="entry name" value="Glutathione_Transferase_(cytos"/>
    <property type="match status" value="1"/>
</dbReference>
<dbReference type="SFLD" id="SFLDG01153">
    <property type="entry name" value="Main.4:_Theta-like"/>
    <property type="match status" value="1"/>
</dbReference>
<dbReference type="SUPFAM" id="SSF47616">
    <property type="entry name" value="GST C-terminal domain-like"/>
    <property type="match status" value="1"/>
</dbReference>
<dbReference type="SUPFAM" id="SSF52833">
    <property type="entry name" value="Thioredoxin-like"/>
    <property type="match status" value="1"/>
</dbReference>
<dbReference type="PROSITE" id="PS50405">
    <property type="entry name" value="GST_CTER"/>
    <property type="match status" value="1"/>
</dbReference>
<dbReference type="PROSITE" id="PS50404">
    <property type="entry name" value="GST_NTER"/>
    <property type="match status" value="1"/>
</dbReference>
<protein>
    <recommendedName>
        <fullName evidence="6">Glutathione S-transferase theta-3</fullName>
        <ecNumber evidence="4">2.5.1.18</ecNumber>
    </recommendedName>
</protein>
<reference evidence="9" key="1">
    <citation type="journal article" date="2002" name="Biochem. J.">
        <title>Identification and characterization of GSTT3, a third murine Theta class glutathione transferase.</title>
        <authorList>
            <person name="Coggan M."/>
            <person name="Flanagan J.U."/>
            <person name="Parker M.W."/>
            <person name="Vichai V."/>
            <person name="Pearson W.R."/>
            <person name="Board P.G."/>
        </authorList>
    </citation>
    <scope>NUCLEOTIDE SEQUENCE [MRNA]</scope>
    <scope>FUNCTION</scope>
    <scope>CATALYTIC ACTIVITY</scope>
    <scope>TISSUE SPECIFICITY</scope>
    <source>
        <strain evidence="9">BALB/cJ</strain>
    </source>
</reference>
<reference evidence="10" key="2">
    <citation type="journal article" date="2005" name="Science">
        <title>The transcriptional landscape of the mammalian genome.</title>
        <authorList>
            <person name="Carninci P."/>
            <person name="Kasukawa T."/>
            <person name="Katayama S."/>
            <person name="Gough J."/>
            <person name="Frith M.C."/>
            <person name="Maeda N."/>
            <person name="Oyama R."/>
            <person name="Ravasi T."/>
            <person name="Lenhard B."/>
            <person name="Wells C."/>
            <person name="Kodzius R."/>
            <person name="Shimokawa K."/>
            <person name="Bajic V.B."/>
            <person name="Brenner S.E."/>
            <person name="Batalov S."/>
            <person name="Forrest A.R."/>
            <person name="Zavolan M."/>
            <person name="Davis M.J."/>
            <person name="Wilming L.G."/>
            <person name="Aidinis V."/>
            <person name="Allen J.E."/>
            <person name="Ambesi-Impiombato A."/>
            <person name="Apweiler R."/>
            <person name="Aturaliya R.N."/>
            <person name="Bailey T.L."/>
            <person name="Bansal M."/>
            <person name="Baxter L."/>
            <person name="Beisel K.W."/>
            <person name="Bersano T."/>
            <person name="Bono H."/>
            <person name="Chalk A.M."/>
            <person name="Chiu K.P."/>
            <person name="Choudhary V."/>
            <person name="Christoffels A."/>
            <person name="Clutterbuck D.R."/>
            <person name="Crowe M.L."/>
            <person name="Dalla E."/>
            <person name="Dalrymple B.P."/>
            <person name="de Bono B."/>
            <person name="Della Gatta G."/>
            <person name="di Bernardo D."/>
            <person name="Down T."/>
            <person name="Engstrom P."/>
            <person name="Fagiolini M."/>
            <person name="Faulkner G."/>
            <person name="Fletcher C.F."/>
            <person name="Fukushima T."/>
            <person name="Furuno M."/>
            <person name="Futaki S."/>
            <person name="Gariboldi M."/>
            <person name="Georgii-Hemming P."/>
            <person name="Gingeras T.R."/>
            <person name="Gojobori T."/>
            <person name="Green R.E."/>
            <person name="Gustincich S."/>
            <person name="Harbers M."/>
            <person name="Hayashi Y."/>
            <person name="Hensch T.K."/>
            <person name="Hirokawa N."/>
            <person name="Hill D."/>
            <person name="Huminiecki L."/>
            <person name="Iacono M."/>
            <person name="Ikeo K."/>
            <person name="Iwama A."/>
            <person name="Ishikawa T."/>
            <person name="Jakt M."/>
            <person name="Kanapin A."/>
            <person name="Katoh M."/>
            <person name="Kawasawa Y."/>
            <person name="Kelso J."/>
            <person name="Kitamura H."/>
            <person name="Kitano H."/>
            <person name="Kollias G."/>
            <person name="Krishnan S.P."/>
            <person name="Kruger A."/>
            <person name="Kummerfeld S.K."/>
            <person name="Kurochkin I.V."/>
            <person name="Lareau L.F."/>
            <person name="Lazarevic D."/>
            <person name="Lipovich L."/>
            <person name="Liu J."/>
            <person name="Liuni S."/>
            <person name="McWilliam S."/>
            <person name="Madan Babu M."/>
            <person name="Madera M."/>
            <person name="Marchionni L."/>
            <person name="Matsuda H."/>
            <person name="Matsuzawa S."/>
            <person name="Miki H."/>
            <person name="Mignone F."/>
            <person name="Miyake S."/>
            <person name="Morris K."/>
            <person name="Mottagui-Tabar S."/>
            <person name="Mulder N."/>
            <person name="Nakano N."/>
            <person name="Nakauchi H."/>
            <person name="Ng P."/>
            <person name="Nilsson R."/>
            <person name="Nishiguchi S."/>
            <person name="Nishikawa S."/>
            <person name="Nori F."/>
            <person name="Ohara O."/>
            <person name="Okazaki Y."/>
            <person name="Orlando V."/>
            <person name="Pang K.C."/>
            <person name="Pavan W.J."/>
            <person name="Pavesi G."/>
            <person name="Pesole G."/>
            <person name="Petrovsky N."/>
            <person name="Piazza S."/>
            <person name="Reed J."/>
            <person name="Reid J.F."/>
            <person name="Ring B.Z."/>
            <person name="Ringwald M."/>
            <person name="Rost B."/>
            <person name="Ruan Y."/>
            <person name="Salzberg S.L."/>
            <person name="Sandelin A."/>
            <person name="Schneider C."/>
            <person name="Schoenbach C."/>
            <person name="Sekiguchi K."/>
            <person name="Semple C.A."/>
            <person name="Seno S."/>
            <person name="Sessa L."/>
            <person name="Sheng Y."/>
            <person name="Shibata Y."/>
            <person name="Shimada H."/>
            <person name="Shimada K."/>
            <person name="Silva D."/>
            <person name="Sinclair B."/>
            <person name="Sperling S."/>
            <person name="Stupka E."/>
            <person name="Sugiura K."/>
            <person name="Sultana R."/>
            <person name="Takenaka Y."/>
            <person name="Taki K."/>
            <person name="Tammoja K."/>
            <person name="Tan S.L."/>
            <person name="Tang S."/>
            <person name="Taylor M.S."/>
            <person name="Tegner J."/>
            <person name="Teichmann S.A."/>
            <person name="Ueda H.R."/>
            <person name="van Nimwegen E."/>
            <person name="Verardo R."/>
            <person name="Wei C.L."/>
            <person name="Yagi K."/>
            <person name="Yamanishi H."/>
            <person name="Zabarovsky E."/>
            <person name="Zhu S."/>
            <person name="Zimmer A."/>
            <person name="Hide W."/>
            <person name="Bult C."/>
            <person name="Grimmond S.M."/>
            <person name="Teasdale R.D."/>
            <person name="Liu E.T."/>
            <person name="Brusic V."/>
            <person name="Quackenbush J."/>
            <person name="Wahlestedt C."/>
            <person name="Mattick J.S."/>
            <person name="Hume D.A."/>
            <person name="Kai C."/>
            <person name="Sasaki D."/>
            <person name="Tomaru Y."/>
            <person name="Fukuda S."/>
            <person name="Kanamori-Katayama M."/>
            <person name="Suzuki M."/>
            <person name="Aoki J."/>
            <person name="Arakawa T."/>
            <person name="Iida J."/>
            <person name="Imamura K."/>
            <person name="Itoh M."/>
            <person name="Kato T."/>
            <person name="Kawaji H."/>
            <person name="Kawagashira N."/>
            <person name="Kawashima T."/>
            <person name="Kojima M."/>
            <person name="Kondo S."/>
            <person name="Konno H."/>
            <person name="Nakano K."/>
            <person name="Ninomiya N."/>
            <person name="Nishio T."/>
            <person name="Okada M."/>
            <person name="Plessy C."/>
            <person name="Shibata K."/>
            <person name="Shiraki T."/>
            <person name="Suzuki S."/>
            <person name="Tagami M."/>
            <person name="Waki K."/>
            <person name="Watahiki A."/>
            <person name="Okamura-Oho Y."/>
            <person name="Suzuki H."/>
            <person name="Kawai J."/>
            <person name="Hayashizaki Y."/>
        </authorList>
    </citation>
    <scope>NUCLEOTIDE SEQUENCE [LARGE SCALE MRNA]</scope>
    <source>
        <strain evidence="12">C57BL/6J</strain>
        <strain>NOD</strain>
        <tissue evidence="12">Spinal cord</tissue>
    </source>
</reference>
<reference evidence="12" key="3">
    <citation type="journal article" date="2009" name="PLoS Biol.">
        <title>Lineage-specific biology revealed by a finished genome assembly of the mouse.</title>
        <authorList>
            <person name="Church D.M."/>
            <person name="Goodstadt L."/>
            <person name="Hillier L.W."/>
            <person name="Zody M.C."/>
            <person name="Goldstein S."/>
            <person name="She X."/>
            <person name="Bult C.J."/>
            <person name="Agarwala R."/>
            <person name="Cherry J.L."/>
            <person name="DiCuccio M."/>
            <person name="Hlavina W."/>
            <person name="Kapustin Y."/>
            <person name="Meric P."/>
            <person name="Maglott D."/>
            <person name="Birtle Z."/>
            <person name="Marques A.C."/>
            <person name="Graves T."/>
            <person name="Zhou S."/>
            <person name="Teague B."/>
            <person name="Potamousis K."/>
            <person name="Churas C."/>
            <person name="Place M."/>
            <person name="Herschleb J."/>
            <person name="Runnheim R."/>
            <person name="Forrest D."/>
            <person name="Amos-Landgraf J."/>
            <person name="Schwartz D.C."/>
            <person name="Cheng Z."/>
            <person name="Lindblad-Toh K."/>
            <person name="Eichler E.E."/>
            <person name="Ponting C.P."/>
        </authorList>
    </citation>
    <scope>NUCLEOTIDE SEQUENCE [LARGE SCALE GENOMIC DNA]</scope>
    <source>
        <strain evidence="12">C57BL/6J</strain>
    </source>
</reference>
<reference evidence="11" key="4">
    <citation type="submission" date="2005-09" db="EMBL/GenBank/DDBJ databases">
        <authorList>
            <person name="Mural R.J."/>
            <person name="Adams M.D."/>
            <person name="Myers E.W."/>
            <person name="Smith H.O."/>
            <person name="Venter J.C."/>
        </authorList>
    </citation>
    <scope>NUCLEOTIDE SEQUENCE [LARGE SCALE GENOMIC DNA]</scope>
</reference>
<reference evidence="7" key="5">
    <citation type="journal article" date="2004" name="Genome Res.">
        <title>The status, quality, and expansion of the NIH full-length cDNA project: the Mammalian Gene Collection (MGC).</title>
        <authorList>
            <consortium name="The MGC Project Team"/>
        </authorList>
    </citation>
    <scope>NUCLEOTIDE SEQUENCE [LARGE SCALE MRNA]</scope>
    <source>
        <strain evidence="7">FVB/N</strain>
        <tissue evidence="7">Mammary tumor</tissue>
        <tissue evidence="8">Salivary gland</tissue>
    </source>
</reference>
<reference key="6">
    <citation type="journal article" date="2010" name="Cell">
        <title>A tissue-specific atlas of mouse protein phosphorylation and expression.</title>
        <authorList>
            <person name="Huttlin E.L."/>
            <person name="Jedrychowski M.P."/>
            <person name="Elias J.E."/>
            <person name="Goswami T."/>
            <person name="Rad R."/>
            <person name="Beausoleil S.A."/>
            <person name="Villen J."/>
            <person name="Haas W."/>
            <person name="Sowa M.E."/>
            <person name="Gygi S.P."/>
        </authorList>
    </citation>
    <scope>IDENTIFICATION BY MASS SPECTROMETRY [LARGE SCALE ANALYSIS]</scope>
    <source>
        <tissue>Brown adipose tissue</tissue>
        <tissue>Heart</tissue>
        <tissue>Kidney</tissue>
        <tissue>Liver</tissue>
        <tissue>Lung</tissue>
        <tissue>Pancreas</tissue>
        <tissue>Testis</tissue>
    </source>
</reference>
<sequence>MGLELYLDLMSQPCRAVYIFAKKNGIPFQLRTIELLKGQQYTDSFAQVNPLRKVPALKDGDFVLAESVAILLYLSRKYKAPDHWYPQDLQTRARVDEYLAWQHTALRSCCTRAMWQKMMFPVFLGQPVPPEMLASTLAELDGCLQVLEDKFLRNQAFLTGSHISVADLVAITELMHPVSAGCKIFESRPKLAAWRQRVEAEVGESLFQEAHEVVLKAKDMPPLMDPALKEKLKLSVQCLLH</sequence>
<proteinExistence type="evidence at protein level"/>
<name>GSTT3_MOUSE</name>
<feature type="chain" id="PRO_0000437667" description="Glutathione S-transferase theta-3" evidence="6">
    <location>
        <begin position="1"/>
        <end position="241"/>
    </location>
</feature>
<feature type="domain" description="GST N-terminal" evidence="2">
    <location>
        <begin position="2"/>
        <end position="82"/>
    </location>
</feature>
<feature type="domain" description="GST C-terminal" evidence="3">
    <location>
        <begin position="88"/>
        <end position="222"/>
    </location>
</feature>
<feature type="binding site" evidence="1">
    <location>
        <begin position="53"/>
        <end position="54"/>
    </location>
    <ligand>
        <name>glutathione</name>
        <dbReference type="ChEBI" id="CHEBI:57925"/>
    </ligand>
</feature>
<feature type="binding site" evidence="1">
    <location>
        <begin position="66"/>
        <end position="67"/>
    </location>
    <ligand>
        <name>glutathione</name>
        <dbReference type="ChEBI" id="CHEBI:57925"/>
    </ligand>
</feature>
<feature type="sequence conflict" description="In Ref. 5; AAH62201." evidence="6" ref="5">
    <original>A</original>
    <variation>V</variation>
    <location>
        <position position="134"/>
    </location>
</feature>
<keyword id="KW-0963">Cytoplasm</keyword>
<keyword id="KW-1185">Reference proteome</keyword>
<keyword id="KW-0808">Transferase</keyword>
<gene>
    <name evidence="5" type="primary">Gstt3</name>
</gene>